<reference key="1">
    <citation type="submission" date="2007-02" db="EMBL/GenBank/DDBJ databases">
        <title>Complete sequence of Clostridium thermocellum ATCC 27405.</title>
        <authorList>
            <consortium name="US DOE Joint Genome Institute"/>
            <person name="Copeland A."/>
            <person name="Lucas S."/>
            <person name="Lapidus A."/>
            <person name="Barry K."/>
            <person name="Detter J.C."/>
            <person name="Glavina del Rio T."/>
            <person name="Hammon N."/>
            <person name="Israni S."/>
            <person name="Dalin E."/>
            <person name="Tice H."/>
            <person name="Pitluck S."/>
            <person name="Chertkov O."/>
            <person name="Brettin T."/>
            <person name="Bruce D."/>
            <person name="Han C."/>
            <person name="Tapia R."/>
            <person name="Gilna P."/>
            <person name="Schmutz J."/>
            <person name="Larimer F."/>
            <person name="Land M."/>
            <person name="Hauser L."/>
            <person name="Kyrpides N."/>
            <person name="Mikhailova N."/>
            <person name="Wu J.H.D."/>
            <person name="Newcomb M."/>
            <person name="Richardson P."/>
        </authorList>
    </citation>
    <scope>NUCLEOTIDE SEQUENCE [LARGE SCALE GENOMIC DNA]</scope>
    <source>
        <strain>ATCC 27405 / DSM 1237 / JCM 9322 / NBRC 103400 / NCIMB 10682 / NRRL B-4536 / VPI 7372</strain>
    </source>
</reference>
<sequence>MKLFELQPAPGSKKLPKRKGRGHGTGNGKTAGRGHKGQNARSGGGVRPGFEGGQMPLYRRVPKRGFTNIFSKVYTEVNVSALNAFDDGTVVTQELLKEKGIIKKINDGVVILGNGELKKKLTVKAARFSKTAAEKIEAAGGKVEVI</sequence>
<protein>
    <recommendedName>
        <fullName evidence="1">Large ribosomal subunit protein uL15</fullName>
    </recommendedName>
    <alternativeName>
        <fullName evidence="3">50S ribosomal protein L15</fullName>
    </alternativeName>
</protein>
<name>RL15_ACET2</name>
<proteinExistence type="inferred from homology"/>
<evidence type="ECO:0000255" key="1">
    <source>
        <dbReference type="HAMAP-Rule" id="MF_01341"/>
    </source>
</evidence>
<evidence type="ECO:0000256" key="2">
    <source>
        <dbReference type="SAM" id="MobiDB-lite"/>
    </source>
</evidence>
<evidence type="ECO:0000305" key="3"/>
<organism>
    <name type="scientific">Acetivibrio thermocellus (strain ATCC 27405 / DSM 1237 / JCM 9322 / NBRC 103400 / NCIMB 10682 / NRRL B-4536 / VPI 7372)</name>
    <name type="common">Clostridium thermocellum</name>
    <dbReference type="NCBI Taxonomy" id="203119"/>
    <lineage>
        <taxon>Bacteria</taxon>
        <taxon>Bacillati</taxon>
        <taxon>Bacillota</taxon>
        <taxon>Clostridia</taxon>
        <taxon>Eubacteriales</taxon>
        <taxon>Oscillospiraceae</taxon>
        <taxon>Acetivibrio</taxon>
    </lineage>
</organism>
<feature type="chain" id="PRO_1000054455" description="Large ribosomal subunit protein uL15">
    <location>
        <begin position="1"/>
        <end position="146"/>
    </location>
</feature>
<feature type="region of interest" description="Disordered" evidence="2">
    <location>
        <begin position="1"/>
        <end position="57"/>
    </location>
</feature>
<feature type="compositionally biased region" description="Gly residues" evidence="2">
    <location>
        <begin position="42"/>
        <end position="52"/>
    </location>
</feature>
<gene>
    <name evidence="1" type="primary">rplO</name>
    <name type="ordered locus">Cthe_2922</name>
</gene>
<accession>A3DJJ1</accession>
<keyword id="KW-1185">Reference proteome</keyword>
<keyword id="KW-0687">Ribonucleoprotein</keyword>
<keyword id="KW-0689">Ribosomal protein</keyword>
<keyword id="KW-0694">RNA-binding</keyword>
<keyword id="KW-0699">rRNA-binding</keyword>
<dbReference type="EMBL" id="CP000568">
    <property type="protein sequence ID" value="ABN54120.1"/>
    <property type="molecule type" value="Genomic_DNA"/>
</dbReference>
<dbReference type="RefSeq" id="WP_003514660.1">
    <property type="nucleotide sequence ID" value="NC_009012.1"/>
</dbReference>
<dbReference type="SMR" id="A3DJJ1"/>
<dbReference type="STRING" id="203119.Cthe_2922"/>
<dbReference type="GeneID" id="35804612"/>
<dbReference type="KEGG" id="cth:Cthe_2922"/>
<dbReference type="eggNOG" id="COG0200">
    <property type="taxonomic scope" value="Bacteria"/>
</dbReference>
<dbReference type="HOGENOM" id="CLU_055188_4_2_9"/>
<dbReference type="OrthoDB" id="9810293at2"/>
<dbReference type="Proteomes" id="UP000002145">
    <property type="component" value="Chromosome"/>
</dbReference>
<dbReference type="GO" id="GO:0022625">
    <property type="term" value="C:cytosolic large ribosomal subunit"/>
    <property type="evidence" value="ECO:0007669"/>
    <property type="project" value="TreeGrafter"/>
</dbReference>
<dbReference type="GO" id="GO:0019843">
    <property type="term" value="F:rRNA binding"/>
    <property type="evidence" value="ECO:0007669"/>
    <property type="project" value="UniProtKB-UniRule"/>
</dbReference>
<dbReference type="GO" id="GO:0003735">
    <property type="term" value="F:structural constituent of ribosome"/>
    <property type="evidence" value="ECO:0007669"/>
    <property type="project" value="InterPro"/>
</dbReference>
<dbReference type="GO" id="GO:0006412">
    <property type="term" value="P:translation"/>
    <property type="evidence" value="ECO:0007669"/>
    <property type="project" value="UniProtKB-UniRule"/>
</dbReference>
<dbReference type="Gene3D" id="3.100.10.10">
    <property type="match status" value="1"/>
</dbReference>
<dbReference type="HAMAP" id="MF_01341">
    <property type="entry name" value="Ribosomal_uL15"/>
    <property type="match status" value="1"/>
</dbReference>
<dbReference type="InterPro" id="IPR030878">
    <property type="entry name" value="Ribosomal_uL15"/>
</dbReference>
<dbReference type="InterPro" id="IPR021131">
    <property type="entry name" value="Ribosomal_uL15/eL18"/>
</dbReference>
<dbReference type="InterPro" id="IPR036227">
    <property type="entry name" value="Ribosomal_uL15/eL18_sf"/>
</dbReference>
<dbReference type="InterPro" id="IPR005749">
    <property type="entry name" value="Ribosomal_uL15_bac-type"/>
</dbReference>
<dbReference type="NCBIfam" id="TIGR01071">
    <property type="entry name" value="rplO_bact"/>
    <property type="match status" value="1"/>
</dbReference>
<dbReference type="PANTHER" id="PTHR12934">
    <property type="entry name" value="50S RIBOSOMAL PROTEIN L15"/>
    <property type="match status" value="1"/>
</dbReference>
<dbReference type="PANTHER" id="PTHR12934:SF11">
    <property type="entry name" value="LARGE RIBOSOMAL SUBUNIT PROTEIN UL15M"/>
    <property type="match status" value="1"/>
</dbReference>
<dbReference type="Pfam" id="PF00828">
    <property type="entry name" value="Ribosomal_L27A"/>
    <property type="match status" value="1"/>
</dbReference>
<dbReference type="SUPFAM" id="SSF52080">
    <property type="entry name" value="Ribosomal proteins L15p and L18e"/>
    <property type="match status" value="1"/>
</dbReference>
<comment type="function">
    <text evidence="1">Binds to the 23S rRNA.</text>
</comment>
<comment type="subunit">
    <text evidence="1">Part of the 50S ribosomal subunit.</text>
</comment>
<comment type="similarity">
    <text evidence="1">Belongs to the universal ribosomal protein uL15 family.</text>
</comment>